<keyword id="KW-0067">ATP-binding</keyword>
<keyword id="KW-0237">DNA synthesis</keyword>
<keyword id="KW-0244">Early protein</keyword>
<keyword id="KW-0418">Kinase</keyword>
<keyword id="KW-0547">Nucleotide-binding</keyword>
<keyword id="KW-0808">Transferase</keyword>
<accession>Q18LE8</accession>
<sequence length="356" mass="40857">MMDSRATYVPPKKISESNSNAEEDPTDCSKPITLKVPTVSETVLATIPHKPQRHLTVYLEGCVGVGKTTMFKYVVDNMFVHTAYDEPMDHWTKWFPENILQTIHEAVNLPTQEQHAYVFSCQNLIATSFLARESGIVKTHPAPFDPSVDVISIADRHALAAYVAFPIHHFLQGRFTYMELQCMLWAFKQDSVDTIFLLQGCSEETLRRVKRRNRKVEHGVTIEYINSLQAAYTVILSTWYRATEYQYSAKRTVSEEISFFIAGPRRTLFYILYDKRPITLPEIEILKLFRKISNDLKKLVLIPVNFQRLVYSSALRRLQDLLIVTPGVTSYIHNENVDTATCAVADNPHFNHHDVS</sequence>
<reference key="1">
    <citation type="journal article" date="2007" name="J. Virol.">
        <title>Identification of novel rodent herpesviruses, including the first gammaherpesvirus of Mus musculus.</title>
        <authorList>
            <person name="Ehlers B."/>
            <person name="Kuchler J."/>
            <person name="Yasmum N."/>
            <person name="Dural G."/>
            <person name="Voigt S."/>
            <person name="Schmidt-Chanasit J."/>
            <person name="Jakel T."/>
            <person name="Matuschka F.R."/>
            <person name="Richter D."/>
            <person name="Essbauer S."/>
            <person name="Hughes D.J."/>
            <person name="Summers C."/>
            <person name="Bennett M."/>
            <person name="Stewart J.P."/>
            <person name="Ulrich R.G."/>
        </authorList>
    </citation>
    <scope>NUCLEOTIDE SEQUENCE [GENOMIC DNA]</scope>
</reference>
<reference key="2">
    <citation type="journal article" date="2001" name="J. Gen. Virol.">
        <title>Genetic and ultrastructural characterization of a European isolate of the fatal endotheliotropic elephant herpesvirus.</title>
        <authorList>
            <person name="Ehlers B."/>
            <person name="Burkhardt S."/>
            <person name="Goltz M."/>
            <person name="Bergmann V."/>
            <person name="Ochs A."/>
            <person name="Weiler H."/>
            <person name="Hentschke J."/>
        </authorList>
    </citation>
    <scope>NUCLEOTIDE SEQUENCE [GENOMIC DNA]</scope>
</reference>
<reference key="3">
    <citation type="journal article" date="2006" name="J. Gen. Virol.">
        <title>Endotheliotropic elephant herpesvirus, the first betaherpesvirus with a thymidine kinase gene.</title>
        <authorList>
            <person name="Ehlers B."/>
            <person name="Dural G."/>
            <person name="Marschall M."/>
            <person name="Schregel V."/>
            <person name="Goltz M."/>
            <person name="Hentschke J."/>
        </authorList>
    </citation>
    <scope>NUCLEOTIDE SEQUENCE [GENOMIC DNA]</scope>
</reference>
<gene>
    <name evidence="1" type="primary">TK</name>
</gene>
<feature type="chain" id="PRO_0000408156" description="Thymidine kinase">
    <location>
        <begin position="1"/>
        <end position="356"/>
    </location>
</feature>
<feature type="region of interest" description="Disordered" evidence="2">
    <location>
        <begin position="1"/>
        <end position="29"/>
    </location>
</feature>
<feature type="active site" description="Proton acceptor" evidence="1">
    <location>
        <position position="86"/>
    </location>
</feature>
<feature type="binding site" evidence="1">
    <location>
        <begin position="61"/>
        <end position="68"/>
    </location>
    <ligand>
        <name>ATP</name>
        <dbReference type="ChEBI" id="CHEBI:30616"/>
    </ligand>
</feature>
<feature type="binding site" evidence="1">
    <location>
        <position position="122"/>
    </location>
    <ligand>
        <name>substrate</name>
    </ligand>
</feature>
<feature type="binding site" evidence="1">
    <location>
        <position position="208"/>
    </location>
    <ligand>
        <name>ATP</name>
        <dbReference type="ChEBI" id="CHEBI:30616"/>
    </ligand>
</feature>
<feature type="binding site" evidence="1">
    <location>
        <position position="214"/>
    </location>
    <ligand>
        <name>substrate</name>
    </ligand>
</feature>
<organismHost>
    <name type="scientific">Elephas maximus</name>
    <name type="common">Indian elephant</name>
    <dbReference type="NCBI Taxonomy" id="9783"/>
</organismHost>
<organismHost>
    <name type="scientific">Loxodonta africana</name>
    <name type="common">African elephant</name>
    <dbReference type="NCBI Taxonomy" id="9785"/>
</organismHost>
<organismHost>
    <name type="scientific">Loxodonta cyclotis</name>
    <name type="common">African forest elephant</name>
    <dbReference type="NCBI Taxonomy" id="99490"/>
</organismHost>
<dbReference type="EC" id="2.7.1.21" evidence="1"/>
<dbReference type="EMBL" id="AF322977">
    <property type="protein sequence ID" value="ABG36571.1"/>
    <property type="molecule type" value="Genomic_DNA"/>
</dbReference>
<dbReference type="SMR" id="Q18LE8"/>
<dbReference type="GO" id="GO:0005524">
    <property type="term" value="F:ATP binding"/>
    <property type="evidence" value="ECO:0007669"/>
    <property type="project" value="UniProtKB-KW"/>
</dbReference>
<dbReference type="GO" id="GO:0004797">
    <property type="term" value="F:thymidine kinase activity"/>
    <property type="evidence" value="ECO:0007669"/>
    <property type="project" value="UniProtKB-EC"/>
</dbReference>
<dbReference type="GO" id="GO:0071897">
    <property type="term" value="P:DNA biosynthetic process"/>
    <property type="evidence" value="ECO:0007669"/>
    <property type="project" value="UniProtKB-KW"/>
</dbReference>
<dbReference type="GO" id="GO:0006230">
    <property type="term" value="P:TMP biosynthetic process"/>
    <property type="evidence" value="ECO:0007669"/>
    <property type="project" value="InterPro"/>
</dbReference>
<dbReference type="Gene3D" id="3.40.50.300">
    <property type="entry name" value="P-loop containing nucleotide triphosphate hydrolases"/>
    <property type="match status" value="1"/>
</dbReference>
<dbReference type="HAMAP" id="MF_04029">
    <property type="entry name" value="HSV_KITH"/>
    <property type="match status" value="1"/>
</dbReference>
<dbReference type="InterPro" id="IPR050566">
    <property type="entry name" value="Deoxyribonucleoside_kinase"/>
</dbReference>
<dbReference type="InterPro" id="IPR001889">
    <property type="entry name" value="Herpes_TK"/>
</dbReference>
<dbReference type="InterPro" id="IPR027417">
    <property type="entry name" value="P-loop_NTPase"/>
</dbReference>
<dbReference type="PANTHER" id="PTHR10513:SF35">
    <property type="entry name" value="DEOXYADENOSINE KINASE"/>
    <property type="match status" value="1"/>
</dbReference>
<dbReference type="PANTHER" id="PTHR10513">
    <property type="entry name" value="DEOXYNUCLEOSIDE KINASE"/>
    <property type="match status" value="1"/>
</dbReference>
<dbReference type="Pfam" id="PF00693">
    <property type="entry name" value="Herpes_TK"/>
    <property type="match status" value="1"/>
</dbReference>
<dbReference type="SUPFAM" id="SSF52540">
    <property type="entry name" value="P-loop containing nucleoside triphosphate hydrolases"/>
    <property type="match status" value="1"/>
</dbReference>
<comment type="function">
    <text evidence="1">Catalyzes the transfer of the gamma-phospho group of ATP to thymidine to generate dTMP in the salvage pathway of pyrimidine synthesis. The dTMP serves as a substrate for DNA polymerase during viral DNA replication. Allows the virus to be reactivated and to grow in non-proliferative cells lacking a high concentration of phosphorylated nucleic acid precursors.</text>
</comment>
<comment type="catalytic activity">
    <reaction evidence="1">
        <text>thymidine + ATP = dTMP + ADP + H(+)</text>
        <dbReference type="Rhea" id="RHEA:19129"/>
        <dbReference type="ChEBI" id="CHEBI:15378"/>
        <dbReference type="ChEBI" id="CHEBI:17748"/>
        <dbReference type="ChEBI" id="CHEBI:30616"/>
        <dbReference type="ChEBI" id="CHEBI:63528"/>
        <dbReference type="ChEBI" id="CHEBI:456216"/>
        <dbReference type="EC" id="2.7.1.21"/>
    </reaction>
</comment>
<comment type="subunit">
    <text evidence="1">Homodimer.</text>
</comment>
<comment type="similarity">
    <text evidence="1">Belongs to the herpesviridae thymidine kinase family.</text>
</comment>
<name>KITH_ELHVK</name>
<protein>
    <recommendedName>
        <fullName evidence="1">Thymidine kinase</fullName>
        <ecNumber evidence="1">2.7.1.21</ecNumber>
    </recommendedName>
</protein>
<organism>
    <name type="scientific">Elephantid herpesvirus 1 (isolate Asian elephant/Berlin/Kiba/1998)</name>
    <name type="common">EIHV-1</name>
    <name type="synonym">Elephant endotheliotropic herpesvirus</name>
    <dbReference type="NCBI Taxonomy" id="654902"/>
    <lineage>
        <taxon>Viruses</taxon>
        <taxon>Duplodnaviria</taxon>
        <taxon>Heunggongvirae</taxon>
        <taxon>Peploviricota</taxon>
        <taxon>Herviviricetes</taxon>
        <taxon>Herpesvirales</taxon>
        <taxon>Orthoherpesviridae</taxon>
        <taxon>Betaherpesvirinae</taxon>
        <taxon>Proboscivirus</taxon>
        <taxon>Proboscivirus elephantidbeta1</taxon>
        <taxon>Elephantid herpesvirus 1</taxon>
    </lineage>
</organism>
<evidence type="ECO:0000255" key="1">
    <source>
        <dbReference type="HAMAP-Rule" id="MF_04029"/>
    </source>
</evidence>
<evidence type="ECO:0000256" key="2">
    <source>
        <dbReference type="SAM" id="MobiDB-lite"/>
    </source>
</evidence>
<proteinExistence type="inferred from homology"/>